<evidence type="ECO:0000255" key="1">
    <source>
        <dbReference type="HAMAP-Rule" id="MF_01307"/>
    </source>
</evidence>
<evidence type="ECO:0000256" key="2">
    <source>
        <dbReference type="SAM" id="MobiDB-lite"/>
    </source>
</evidence>
<evidence type="ECO:0000305" key="3"/>
<organism>
    <name type="scientific">Prochlorococcus marinus (strain NATL1A)</name>
    <dbReference type="NCBI Taxonomy" id="167555"/>
    <lineage>
        <taxon>Bacteria</taxon>
        <taxon>Bacillati</taxon>
        <taxon>Cyanobacteriota</taxon>
        <taxon>Cyanophyceae</taxon>
        <taxon>Synechococcales</taxon>
        <taxon>Prochlorococcaceae</taxon>
        <taxon>Prochlorococcus</taxon>
    </lineage>
</organism>
<comment type="function">
    <text evidence="1">With S4 and S12 plays an important role in translational accuracy.</text>
</comment>
<comment type="function">
    <text evidence="1">Located at the back of the 30S subunit body where it stabilizes the conformation of the head with respect to the body.</text>
</comment>
<comment type="subunit">
    <text evidence="1">Part of the 30S ribosomal subunit. Contacts proteins S4 and S8.</text>
</comment>
<comment type="domain">
    <text>The N-terminal domain interacts with the head of the 30S subunit; the C-terminal domain interacts with the body and contacts protein S4. The interaction surface between S4 and S5 is involved in control of translational fidelity.</text>
</comment>
<comment type="similarity">
    <text evidence="1">Belongs to the universal ribosomal protein uS5 family.</text>
</comment>
<dbReference type="EMBL" id="CP000553">
    <property type="protein sequence ID" value="ABM76543.1"/>
    <property type="molecule type" value="Genomic_DNA"/>
</dbReference>
<dbReference type="RefSeq" id="WP_011824505.1">
    <property type="nucleotide sequence ID" value="NC_008819.1"/>
</dbReference>
<dbReference type="SMR" id="A2C4Y3"/>
<dbReference type="KEGG" id="pme:NATL1_19871"/>
<dbReference type="eggNOG" id="COG0098">
    <property type="taxonomic scope" value="Bacteria"/>
</dbReference>
<dbReference type="HOGENOM" id="CLU_065898_2_1_3"/>
<dbReference type="Proteomes" id="UP000002592">
    <property type="component" value="Chromosome"/>
</dbReference>
<dbReference type="GO" id="GO:0015935">
    <property type="term" value="C:small ribosomal subunit"/>
    <property type="evidence" value="ECO:0007669"/>
    <property type="project" value="InterPro"/>
</dbReference>
<dbReference type="GO" id="GO:0019843">
    <property type="term" value="F:rRNA binding"/>
    <property type="evidence" value="ECO:0007669"/>
    <property type="project" value="UniProtKB-UniRule"/>
</dbReference>
<dbReference type="GO" id="GO:0003735">
    <property type="term" value="F:structural constituent of ribosome"/>
    <property type="evidence" value="ECO:0007669"/>
    <property type="project" value="InterPro"/>
</dbReference>
<dbReference type="GO" id="GO:0006412">
    <property type="term" value="P:translation"/>
    <property type="evidence" value="ECO:0007669"/>
    <property type="project" value="UniProtKB-UniRule"/>
</dbReference>
<dbReference type="FunFam" id="3.30.230.10:FF:000002">
    <property type="entry name" value="30S ribosomal protein S5"/>
    <property type="match status" value="1"/>
</dbReference>
<dbReference type="Gene3D" id="3.30.160.20">
    <property type="match status" value="1"/>
</dbReference>
<dbReference type="Gene3D" id="3.30.230.10">
    <property type="match status" value="1"/>
</dbReference>
<dbReference type="HAMAP" id="MF_01307_B">
    <property type="entry name" value="Ribosomal_uS5_B"/>
    <property type="match status" value="1"/>
</dbReference>
<dbReference type="InterPro" id="IPR020568">
    <property type="entry name" value="Ribosomal_Su5_D2-typ_SF"/>
</dbReference>
<dbReference type="InterPro" id="IPR000851">
    <property type="entry name" value="Ribosomal_uS5"/>
</dbReference>
<dbReference type="InterPro" id="IPR005712">
    <property type="entry name" value="Ribosomal_uS5_bac-type"/>
</dbReference>
<dbReference type="InterPro" id="IPR005324">
    <property type="entry name" value="Ribosomal_uS5_C"/>
</dbReference>
<dbReference type="InterPro" id="IPR013810">
    <property type="entry name" value="Ribosomal_uS5_N"/>
</dbReference>
<dbReference type="InterPro" id="IPR018192">
    <property type="entry name" value="Ribosomal_uS5_N_CS"/>
</dbReference>
<dbReference type="InterPro" id="IPR014721">
    <property type="entry name" value="Ribsml_uS5_D2-typ_fold_subgr"/>
</dbReference>
<dbReference type="NCBIfam" id="TIGR01021">
    <property type="entry name" value="rpsE_bact"/>
    <property type="match status" value="1"/>
</dbReference>
<dbReference type="PANTHER" id="PTHR48277">
    <property type="entry name" value="MITOCHONDRIAL RIBOSOMAL PROTEIN S5"/>
    <property type="match status" value="1"/>
</dbReference>
<dbReference type="PANTHER" id="PTHR48277:SF1">
    <property type="entry name" value="MITOCHONDRIAL RIBOSOMAL PROTEIN S5"/>
    <property type="match status" value="1"/>
</dbReference>
<dbReference type="Pfam" id="PF00333">
    <property type="entry name" value="Ribosomal_S5"/>
    <property type="match status" value="1"/>
</dbReference>
<dbReference type="Pfam" id="PF03719">
    <property type="entry name" value="Ribosomal_S5_C"/>
    <property type="match status" value="1"/>
</dbReference>
<dbReference type="SUPFAM" id="SSF54768">
    <property type="entry name" value="dsRNA-binding domain-like"/>
    <property type="match status" value="1"/>
</dbReference>
<dbReference type="SUPFAM" id="SSF54211">
    <property type="entry name" value="Ribosomal protein S5 domain 2-like"/>
    <property type="match status" value="1"/>
</dbReference>
<dbReference type="PROSITE" id="PS00585">
    <property type="entry name" value="RIBOSOMAL_S5"/>
    <property type="match status" value="1"/>
</dbReference>
<dbReference type="PROSITE" id="PS50881">
    <property type="entry name" value="S5_DSRBD"/>
    <property type="match status" value="1"/>
</dbReference>
<feature type="chain" id="PRO_1000086037" description="Small ribosomal subunit protein uS5">
    <location>
        <begin position="1"/>
        <end position="208"/>
    </location>
</feature>
<feature type="domain" description="S5 DRBM" evidence="1">
    <location>
        <begin position="52"/>
        <end position="115"/>
    </location>
</feature>
<feature type="region of interest" description="Disordered" evidence="2">
    <location>
        <begin position="1"/>
        <end position="54"/>
    </location>
</feature>
<feature type="compositionally biased region" description="Polar residues" evidence="2">
    <location>
        <begin position="1"/>
        <end position="19"/>
    </location>
</feature>
<feature type="compositionally biased region" description="Basic and acidic residues" evidence="2">
    <location>
        <begin position="25"/>
        <end position="37"/>
    </location>
</feature>
<feature type="compositionally biased region" description="Basic and acidic residues" evidence="2">
    <location>
        <begin position="44"/>
        <end position="54"/>
    </location>
</feature>
<keyword id="KW-0687">Ribonucleoprotein</keyword>
<keyword id="KW-0689">Ribosomal protein</keyword>
<keyword id="KW-0694">RNA-binding</keyword>
<keyword id="KW-0699">rRNA-binding</keyword>
<protein>
    <recommendedName>
        <fullName evidence="1">Small ribosomal subunit protein uS5</fullName>
    </recommendedName>
    <alternativeName>
        <fullName evidence="3">30S ribosomal protein S5</fullName>
    </alternativeName>
</protein>
<accession>A2C4Y3</accession>
<proteinExistence type="inferred from homology"/>
<sequence length="208" mass="22038">MTDSNNQSPNKKTSGSSGAPTAADGRQENRRSRGEKRGGRRDRRGQERDSEWQERVVQIRRVSKTVKGGKKMSFRAIVVVGNEKGQVGVGVGKAGDVIGAVRKGVADGKKHLVRVPLTRNSSIPTLSNGRDGAASVLIRPAAPGTGVIAGGSIRTVLELAGIKNVLAKRLGSKTPLNNARAAMVALSELRTHKATAKERGISLEQIYS</sequence>
<reference key="1">
    <citation type="journal article" date="2007" name="PLoS Genet.">
        <title>Patterns and implications of gene gain and loss in the evolution of Prochlorococcus.</title>
        <authorList>
            <person name="Kettler G.C."/>
            <person name="Martiny A.C."/>
            <person name="Huang K."/>
            <person name="Zucker J."/>
            <person name="Coleman M.L."/>
            <person name="Rodrigue S."/>
            <person name="Chen F."/>
            <person name="Lapidus A."/>
            <person name="Ferriera S."/>
            <person name="Johnson J."/>
            <person name="Steglich C."/>
            <person name="Church G.M."/>
            <person name="Richardson P."/>
            <person name="Chisholm S.W."/>
        </authorList>
    </citation>
    <scope>NUCLEOTIDE SEQUENCE [LARGE SCALE GENOMIC DNA]</scope>
    <source>
        <strain>NATL1A</strain>
    </source>
</reference>
<name>RS5_PROM1</name>
<gene>
    <name evidence="1" type="primary">rpsE</name>
    <name evidence="1" type="synonym">rps5</name>
    <name type="ordered locus">NATL1_19871</name>
</gene>